<accession>B2HLJ5</accession>
<dbReference type="EC" id="2.1.1.-"/>
<dbReference type="EMBL" id="CP000854">
    <property type="protein sequence ID" value="ACC43727.1"/>
    <property type="molecule type" value="Genomic_DNA"/>
</dbReference>
<dbReference type="RefSeq" id="WP_012396828.1">
    <property type="nucleotide sequence ID" value="NC_010612.1"/>
</dbReference>
<dbReference type="SMR" id="B2HLJ5"/>
<dbReference type="STRING" id="216594.MMAR_5323"/>
<dbReference type="KEGG" id="mmi:MMAR_5323"/>
<dbReference type="eggNOG" id="COG3315">
    <property type="taxonomic scope" value="Bacteria"/>
</dbReference>
<dbReference type="HOGENOM" id="CLU_056160_2_1_11"/>
<dbReference type="OrthoDB" id="9806164at2"/>
<dbReference type="Proteomes" id="UP000001190">
    <property type="component" value="Chromosome"/>
</dbReference>
<dbReference type="GO" id="GO:0008168">
    <property type="term" value="F:methyltransferase activity"/>
    <property type="evidence" value="ECO:0007669"/>
    <property type="project" value="UniProtKB-KW"/>
</dbReference>
<dbReference type="GO" id="GO:0032259">
    <property type="term" value="P:methylation"/>
    <property type="evidence" value="ECO:0007669"/>
    <property type="project" value="UniProtKB-KW"/>
</dbReference>
<dbReference type="FunFam" id="3.40.50.150:FF:000152">
    <property type="entry name" value="S-adenosyl-L-methionine-dependent methyltransferase"/>
    <property type="match status" value="1"/>
</dbReference>
<dbReference type="Gene3D" id="3.40.50.150">
    <property type="entry name" value="Vaccinia Virus protein VP39"/>
    <property type="match status" value="1"/>
</dbReference>
<dbReference type="InterPro" id="IPR007213">
    <property type="entry name" value="Ppm1/Ppm2/Tcmp"/>
</dbReference>
<dbReference type="InterPro" id="IPR029063">
    <property type="entry name" value="SAM-dependent_MTases_sf"/>
</dbReference>
<dbReference type="InterPro" id="IPR011610">
    <property type="entry name" value="SAM_mthyl_Trfase_ML2640-like"/>
</dbReference>
<dbReference type="NCBIfam" id="TIGR00027">
    <property type="entry name" value="mthyl_TIGR00027"/>
    <property type="match status" value="1"/>
</dbReference>
<dbReference type="PANTHER" id="PTHR43619">
    <property type="entry name" value="S-ADENOSYL-L-METHIONINE-DEPENDENT METHYLTRANSFERASE YKTD-RELATED"/>
    <property type="match status" value="1"/>
</dbReference>
<dbReference type="PANTHER" id="PTHR43619:SF2">
    <property type="entry name" value="S-ADENOSYL-L-METHIONINE-DEPENDENT METHYLTRANSFERASES SUPERFAMILY PROTEIN"/>
    <property type="match status" value="1"/>
</dbReference>
<dbReference type="Pfam" id="PF04072">
    <property type="entry name" value="LCM"/>
    <property type="match status" value="1"/>
</dbReference>
<dbReference type="SUPFAM" id="SSF53335">
    <property type="entry name" value="S-adenosyl-L-methionine-dependent methyltransferases"/>
    <property type="match status" value="1"/>
</dbReference>
<evidence type="ECO:0000250" key="1"/>
<evidence type="ECO:0000305" key="2"/>
<sequence>MPRTDNDSWTITESVGATALGVAAARAAETESENPLIEDPFARVFVDAAGDGMWSMFANPALLAGAPEIESQVGARVRQMIDFMATRTAFFDEFFLGAADTGVRQVVILASGLDSRAWRLPWPDGTVVYELDQPRVLEFKSATLRQHGARPTAQLVNIPIDLRQDWPAALLDSGFDASKPTAWSAEGLVRYLPARAQDLLFERIDTLSPAGSWLATNVPQEGFSDPDLVRRQHEEMQRMRAAAGRLVEIQMPAVEDLWYAEERTPVADWLGEHGWRASATTSAELLTRYGRPVPDDAEGPVPPTLFVSAHRPAA</sequence>
<organism>
    <name type="scientific">Mycobacterium marinum (strain ATCC BAA-535 / M)</name>
    <dbReference type="NCBI Taxonomy" id="216594"/>
    <lineage>
        <taxon>Bacteria</taxon>
        <taxon>Bacillati</taxon>
        <taxon>Actinomycetota</taxon>
        <taxon>Actinomycetes</taxon>
        <taxon>Mycobacteriales</taxon>
        <taxon>Mycobacteriaceae</taxon>
        <taxon>Mycobacterium</taxon>
        <taxon>Mycobacterium ulcerans group</taxon>
    </lineage>
</organism>
<proteinExistence type="inferred from homology"/>
<keyword id="KW-0489">Methyltransferase</keyword>
<keyword id="KW-1185">Reference proteome</keyword>
<keyword id="KW-0949">S-adenosyl-L-methionine</keyword>
<keyword id="KW-0808">Transferase</keyword>
<comment type="function">
    <text evidence="1">Exhibits S-adenosyl-L-methionine-dependent methyltransferase activity.</text>
</comment>
<comment type="similarity">
    <text evidence="2">Belongs to the UPF0677 family.</text>
</comment>
<name>Y5323_MYCMM</name>
<gene>
    <name type="ordered locus">MMAR_5323</name>
</gene>
<protein>
    <recommendedName>
        <fullName>Putative S-adenosyl-L-methionine-dependent methyltransferase MMAR_5323</fullName>
        <ecNumber>2.1.1.-</ecNumber>
    </recommendedName>
</protein>
<feature type="chain" id="PRO_0000361173" description="Putative S-adenosyl-L-methionine-dependent methyltransferase MMAR_5323">
    <location>
        <begin position="1"/>
        <end position="314"/>
    </location>
</feature>
<feature type="binding site" evidence="1">
    <location>
        <position position="132"/>
    </location>
    <ligand>
        <name>S-adenosyl-L-methionine</name>
        <dbReference type="ChEBI" id="CHEBI:59789"/>
    </ligand>
</feature>
<feature type="binding site" evidence="1">
    <location>
        <begin position="161"/>
        <end position="162"/>
    </location>
    <ligand>
        <name>S-adenosyl-L-methionine</name>
        <dbReference type="ChEBI" id="CHEBI:59789"/>
    </ligand>
</feature>
<reference key="1">
    <citation type="journal article" date="2008" name="Genome Res.">
        <title>Insights from the complete genome sequence of Mycobacterium marinum on the evolution of Mycobacterium tuberculosis.</title>
        <authorList>
            <person name="Stinear T.P."/>
            <person name="Seemann T."/>
            <person name="Harrison P.F."/>
            <person name="Jenkin G.A."/>
            <person name="Davies J.K."/>
            <person name="Johnson P.D."/>
            <person name="Abdellah Z."/>
            <person name="Arrowsmith C."/>
            <person name="Chillingworth T."/>
            <person name="Churcher C."/>
            <person name="Clarke K."/>
            <person name="Cronin A."/>
            <person name="Davis P."/>
            <person name="Goodhead I."/>
            <person name="Holroyd N."/>
            <person name="Jagels K."/>
            <person name="Lord A."/>
            <person name="Moule S."/>
            <person name="Mungall K."/>
            <person name="Norbertczak H."/>
            <person name="Quail M.A."/>
            <person name="Rabbinowitsch E."/>
            <person name="Walker D."/>
            <person name="White B."/>
            <person name="Whitehead S."/>
            <person name="Small P.L."/>
            <person name="Brosch R."/>
            <person name="Ramakrishnan L."/>
            <person name="Fischbach M.A."/>
            <person name="Parkhill J."/>
            <person name="Cole S.T."/>
        </authorList>
    </citation>
    <scope>NUCLEOTIDE SEQUENCE [LARGE SCALE GENOMIC DNA]</scope>
    <source>
        <strain>ATCC BAA-535 / M</strain>
    </source>
</reference>